<organism>
    <name type="scientific">Ralstonia nicotianae (strain ATCC BAA-1114 / GMI1000)</name>
    <name type="common">Ralstonia solanacearum</name>
    <dbReference type="NCBI Taxonomy" id="267608"/>
    <lineage>
        <taxon>Bacteria</taxon>
        <taxon>Pseudomonadati</taxon>
        <taxon>Pseudomonadota</taxon>
        <taxon>Betaproteobacteria</taxon>
        <taxon>Burkholderiales</taxon>
        <taxon>Burkholderiaceae</taxon>
        <taxon>Ralstonia</taxon>
        <taxon>Ralstonia solanacearum species complex</taxon>
    </lineage>
</organism>
<comment type="function">
    <text evidence="1">Specifically methylates position 2 of adenine 2503 in 23S rRNA and position 2 of adenine 37 in tRNAs. m2A2503 modification seems to play a crucial role in the proofreading step occurring at the peptidyl transferase center and thus would serve to optimize ribosomal fidelity.</text>
</comment>
<comment type="catalytic activity">
    <reaction evidence="1">
        <text>adenosine(2503) in 23S rRNA + 2 reduced [2Fe-2S]-[ferredoxin] + 2 S-adenosyl-L-methionine = 2-methyladenosine(2503) in 23S rRNA + 5'-deoxyadenosine + L-methionine + 2 oxidized [2Fe-2S]-[ferredoxin] + S-adenosyl-L-homocysteine</text>
        <dbReference type="Rhea" id="RHEA:42916"/>
        <dbReference type="Rhea" id="RHEA-COMP:10000"/>
        <dbReference type="Rhea" id="RHEA-COMP:10001"/>
        <dbReference type="Rhea" id="RHEA-COMP:10152"/>
        <dbReference type="Rhea" id="RHEA-COMP:10282"/>
        <dbReference type="ChEBI" id="CHEBI:17319"/>
        <dbReference type="ChEBI" id="CHEBI:33737"/>
        <dbReference type="ChEBI" id="CHEBI:33738"/>
        <dbReference type="ChEBI" id="CHEBI:57844"/>
        <dbReference type="ChEBI" id="CHEBI:57856"/>
        <dbReference type="ChEBI" id="CHEBI:59789"/>
        <dbReference type="ChEBI" id="CHEBI:74411"/>
        <dbReference type="ChEBI" id="CHEBI:74497"/>
        <dbReference type="EC" id="2.1.1.192"/>
    </reaction>
</comment>
<comment type="catalytic activity">
    <reaction evidence="1">
        <text>adenosine(37) in tRNA + 2 reduced [2Fe-2S]-[ferredoxin] + 2 S-adenosyl-L-methionine = 2-methyladenosine(37) in tRNA + 5'-deoxyadenosine + L-methionine + 2 oxidized [2Fe-2S]-[ferredoxin] + S-adenosyl-L-homocysteine</text>
        <dbReference type="Rhea" id="RHEA:43332"/>
        <dbReference type="Rhea" id="RHEA-COMP:10000"/>
        <dbReference type="Rhea" id="RHEA-COMP:10001"/>
        <dbReference type="Rhea" id="RHEA-COMP:10162"/>
        <dbReference type="Rhea" id="RHEA-COMP:10485"/>
        <dbReference type="ChEBI" id="CHEBI:17319"/>
        <dbReference type="ChEBI" id="CHEBI:33737"/>
        <dbReference type="ChEBI" id="CHEBI:33738"/>
        <dbReference type="ChEBI" id="CHEBI:57844"/>
        <dbReference type="ChEBI" id="CHEBI:57856"/>
        <dbReference type="ChEBI" id="CHEBI:59789"/>
        <dbReference type="ChEBI" id="CHEBI:74411"/>
        <dbReference type="ChEBI" id="CHEBI:74497"/>
        <dbReference type="EC" id="2.1.1.192"/>
    </reaction>
</comment>
<comment type="cofactor">
    <cofactor evidence="1">
        <name>[4Fe-4S] cluster</name>
        <dbReference type="ChEBI" id="CHEBI:49883"/>
    </cofactor>
    <text evidence="1">Binds 1 [4Fe-4S] cluster. The cluster is coordinated with 3 cysteines and an exchangeable S-adenosyl-L-methionine.</text>
</comment>
<comment type="subcellular location">
    <subcellularLocation>
        <location evidence="1">Cytoplasm</location>
    </subcellularLocation>
</comment>
<comment type="miscellaneous">
    <text evidence="1">Reaction proceeds by a ping-pong mechanism involving intermediate methylation of a conserved cysteine residue.</text>
</comment>
<comment type="similarity">
    <text evidence="1">Belongs to the radical SAM superfamily. RlmN family.</text>
</comment>
<feature type="chain" id="PRO_0000350356" description="Dual-specificity RNA methyltransferase RlmN">
    <location>
        <begin position="1"/>
        <end position="383"/>
    </location>
</feature>
<feature type="domain" description="Radical SAM core" evidence="2">
    <location>
        <begin position="99"/>
        <end position="339"/>
    </location>
</feature>
<feature type="active site" description="Proton acceptor" evidence="1">
    <location>
        <position position="93"/>
    </location>
</feature>
<feature type="active site" description="S-methylcysteine intermediate" evidence="1">
    <location>
        <position position="344"/>
    </location>
</feature>
<feature type="binding site" evidence="1">
    <location>
        <position position="113"/>
    </location>
    <ligand>
        <name>[4Fe-4S] cluster</name>
        <dbReference type="ChEBI" id="CHEBI:49883"/>
        <note>4Fe-4S-S-AdoMet</note>
    </ligand>
</feature>
<feature type="binding site" evidence="1">
    <location>
        <position position="117"/>
    </location>
    <ligand>
        <name>[4Fe-4S] cluster</name>
        <dbReference type="ChEBI" id="CHEBI:49883"/>
        <note>4Fe-4S-S-AdoMet</note>
    </ligand>
</feature>
<feature type="binding site" evidence="1">
    <location>
        <position position="120"/>
    </location>
    <ligand>
        <name>[4Fe-4S] cluster</name>
        <dbReference type="ChEBI" id="CHEBI:49883"/>
        <note>4Fe-4S-S-AdoMet</note>
    </ligand>
</feature>
<feature type="binding site" evidence="1">
    <location>
        <begin position="170"/>
        <end position="171"/>
    </location>
    <ligand>
        <name>S-adenosyl-L-methionine</name>
        <dbReference type="ChEBI" id="CHEBI:59789"/>
    </ligand>
</feature>
<feature type="binding site" evidence="1">
    <location>
        <position position="202"/>
    </location>
    <ligand>
        <name>S-adenosyl-L-methionine</name>
        <dbReference type="ChEBI" id="CHEBI:59789"/>
    </ligand>
</feature>
<feature type="binding site" evidence="1">
    <location>
        <begin position="224"/>
        <end position="226"/>
    </location>
    <ligand>
        <name>S-adenosyl-L-methionine</name>
        <dbReference type="ChEBI" id="CHEBI:59789"/>
    </ligand>
</feature>
<feature type="binding site" evidence="1">
    <location>
        <position position="301"/>
    </location>
    <ligand>
        <name>S-adenosyl-L-methionine</name>
        <dbReference type="ChEBI" id="CHEBI:59789"/>
    </ligand>
</feature>
<feature type="disulfide bond" description="(transient)" evidence="1">
    <location>
        <begin position="106"/>
        <end position="344"/>
    </location>
</feature>
<reference key="1">
    <citation type="journal article" date="2002" name="Nature">
        <title>Genome sequence of the plant pathogen Ralstonia solanacearum.</title>
        <authorList>
            <person name="Salanoubat M."/>
            <person name="Genin S."/>
            <person name="Artiguenave F."/>
            <person name="Gouzy J."/>
            <person name="Mangenot S."/>
            <person name="Arlat M."/>
            <person name="Billault A."/>
            <person name="Brottier P."/>
            <person name="Camus J.-C."/>
            <person name="Cattolico L."/>
            <person name="Chandler M."/>
            <person name="Choisne N."/>
            <person name="Claudel-Renard C."/>
            <person name="Cunnac S."/>
            <person name="Demange N."/>
            <person name="Gaspin C."/>
            <person name="Lavie M."/>
            <person name="Moisan A."/>
            <person name="Robert C."/>
            <person name="Saurin W."/>
            <person name="Schiex T."/>
            <person name="Siguier P."/>
            <person name="Thebault P."/>
            <person name="Whalen M."/>
            <person name="Wincker P."/>
            <person name="Levy M."/>
            <person name="Weissenbach J."/>
            <person name="Boucher C.A."/>
        </authorList>
    </citation>
    <scope>NUCLEOTIDE SEQUENCE [LARGE SCALE GENOMIC DNA]</scope>
    <source>
        <strain>ATCC BAA-1114 / GMI1000</strain>
    </source>
</reference>
<sequence>MNDMVNLLDFDAQGLLAYCESLGEKSFRAKQLQRWIHQSGAADFGEMTDLAKSLREKLATRATIQAPAVISDHLSSDGTRKWLVDVGAGNAVETVYIPEETRGTLCVSSQAGCAVNCRFCSTGKQGFSRNLSTGEIVGQLWMAEFAMRKQLGRGPKDDRVITNVVMMGMGEPLLNYDAVVPAMRLMLDDNAYGLSRRRVTLSTSGVVPMMDRLSQDLPVALAVSLHASNDALRDVLVPLNKKYPLAELMAACRRYLEFAPRDFITFEYCMLDGVNDSVEHARELLRVVADVPCKFNLIPFNPFPESGLKRSNNEQIRRFSQVLLDAGIVTTIRKTRGDDIDAACGQLAGEVKDRTRLAERGKFGKTVPIQVIGADSTHRMGSA</sequence>
<protein>
    <recommendedName>
        <fullName evidence="1">Dual-specificity RNA methyltransferase RlmN</fullName>
        <ecNumber evidence="1">2.1.1.192</ecNumber>
    </recommendedName>
    <alternativeName>
        <fullName evidence="1">23S rRNA (adenine(2503)-C(2))-methyltransferase</fullName>
    </alternativeName>
    <alternativeName>
        <fullName evidence="1">23S rRNA m2A2503 methyltransferase</fullName>
    </alternativeName>
    <alternativeName>
        <fullName evidence="1">Ribosomal RNA large subunit methyltransferase N</fullName>
    </alternativeName>
    <alternativeName>
        <fullName evidence="1">tRNA (adenine(37)-C(2))-methyltransferase</fullName>
    </alternativeName>
    <alternativeName>
        <fullName evidence="1">tRNA m2A37 methyltransferase</fullName>
    </alternativeName>
</protein>
<keyword id="KW-0004">4Fe-4S</keyword>
<keyword id="KW-0963">Cytoplasm</keyword>
<keyword id="KW-1015">Disulfide bond</keyword>
<keyword id="KW-0408">Iron</keyword>
<keyword id="KW-0411">Iron-sulfur</keyword>
<keyword id="KW-0479">Metal-binding</keyword>
<keyword id="KW-0489">Methyltransferase</keyword>
<keyword id="KW-1185">Reference proteome</keyword>
<keyword id="KW-0698">rRNA processing</keyword>
<keyword id="KW-0949">S-adenosyl-L-methionine</keyword>
<keyword id="KW-0808">Transferase</keyword>
<keyword id="KW-0819">tRNA processing</keyword>
<dbReference type="EC" id="2.1.1.192" evidence="1"/>
<dbReference type="EMBL" id="AL646052">
    <property type="protein sequence ID" value="CAD14914.1"/>
    <property type="molecule type" value="Genomic_DNA"/>
</dbReference>
<dbReference type="RefSeq" id="WP_011001162.1">
    <property type="nucleotide sequence ID" value="NC_003295.1"/>
</dbReference>
<dbReference type="SMR" id="Q8Y032"/>
<dbReference type="STRING" id="267608.RSc1212"/>
<dbReference type="EnsemblBacteria" id="CAD14914">
    <property type="protein sequence ID" value="CAD14914"/>
    <property type="gene ID" value="RSc1212"/>
</dbReference>
<dbReference type="KEGG" id="rso:RSc1212"/>
<dbReference type="eggNOG" id="COG0820">
    <property type="taxonomic scope" value="Bacteria"/>
</dbReference>
<dbReference type="HOGENOM" id="CLU_029101_0_0_4"/>
<dbReference type="Proteomes" id="UP000001436">
    <property type="component" value="Chromosome"/>
</dbReference>
<dbReference type="GO" id="GO:0005737">
    <property type="term" value="C:cytoplasm"/>
    <property type="evidence" value="ECO:0007669"/>
    <property type="project" value="UniProtKB-SubCell"/>
</dbReference>
<dbReference type="GO" id="GO:0051539">
    <property type="term" value="F:4 iron, 4 sulfur cluster binding"/>
    <property type="evidence" value="ECO:0007669"/>
    <property type="project" value="UniProtKB-UniRule"/>
</dbReference>
<dbReference type="GO" id="GO:0046872">
    <property type="term" value="F:metal ion binding"/>
    <property type="evidence" value="ECO:0007669"/>
    <property type="project" value="UniProtKB-KW"/>
</dbReference>
<dbReference type="GO" id="GO:0070040">
    <property type="term" value="F:rRNA (adenine(2503)-C2-)-methyltransferase activity"/>
    <property type="evidence" value="ECO:0007669"/>
    <property type="project" value="UniProtKB-UniRule"/>
</dbReference>
<dbReference type="GO" id="GO:0019843">
    <property type="term" value="F:rRNA binding"/>
    <property type="evidence" value="ECO:0007669"/>
    <property type="project" value="UniProtKB-UniRule"/>
</dbReference>
<dbReference type="GO" id="GO:0002935">
    <property type="term" value="F:tRNA (adenine(37)-C2)-methyltransferase activity"/>
    <property type="evidence" value="ECO:0007669"/>
    <property type="project" value="UniProtKB-UniRule"/>
</dbReference>
<dbReference type="GO" id="GO:0000049">
    <property type="term" value="F:tRNA binding"/>
    <property type="evidence" value="ECO:0007669"/>
    <property type="project" value="UniProtKB-UniRule"/>
</dbReference>
<dbReference type="GO" id="GO:0070475">
    <property type="term" value="P:rRNA base methylation"/>
    <property type="evidence" value="ECO:0007669"/>
    <property type="project" value="UniProtKB-UniRule"/>
</dbReference>
<dbReference type="GO" id="GO:0030488">
    <property type="term" value="P:tRNA methylation"/>
    <property type="evidence" value="ECO:0007669"/>
    <property type="project" value="UniProtKB-UniRule"/>
</dbReference>
<dbReference type="CDD" id="cd01335">
    <property type="entry name" value="Radical_SAM"/>
    <property type="match status" value="1"/>
</dbReference>
<dbReference type="FunFam" id="1.10.150.530:FF:000003">
    <property type="entry name" value="Dual-specificity RNA methyltransferase RlmN"/>
    <property type="match status" value="1"/>
</dbReference>
<dbReference type="FunFam" id="3.20.20.70:FF:000008">
    <property type="entry name" value="Dual-specificity RNA methyltransferase RlmN"/>
    <property type="match status" value="1"/>
</dbReference>
<dbReference type="Gene3D" id="1.10.150.530">
    <property type="match status" value="1"/>
</dbReference>
<dbReference type="Gene3D" id="3.20.20.70">
    <property type="entry name" value="Aldolase class I"/>
    <property type="match status" value="1"/>
</dbReference>
<dbReference type="HAMAP" id="MF_01849">
    <property type="entry name" value="RNA_methyltr_RlmN"/>
    <property type="match status" value="1"/>
</dbReference>
<dbReference type="InterPro" id="IPR013785">
    <property type="entry name" value="Aldolase_TIM"/>
</dbReference>
<dbReference type="InterPro" id="IPR040072">
    <property type="entry name" value="Methyltransferase_A"/>
</dbReference>
<dbReference type="InterPro" id="IPR048641">
    <property type="entry name" value="RlmN_N"/>
</dbReference>
<dbReference type="InterPro" id="IPR027492">
    <property type="entry name" value="RNA_MTrfase_RlmN"/>
</dbReference>
<dbReference type="InterPro" id="IPR004383">
    <property type="entry name" value="rRNA_lsu_MTrfase_RlmN/Cfr"/>
</dbReference>
<dbReference type="InterPro" id="IPR007197">
    <property type="entry name" value="rSAM"/>
</dbReference>
<dbReference type="NCBIfam" id="TIGR00048">
    <property type="entry name" value="rRNA_mod_RlmN"/>
    <property type="match status" value="1"/>
</dbReference>
<dbReference type="PANTHER" id="PTHR30544">
    <property type="entry name" value="23S RRNA METHYLTRANSFERASE"/>
    <property type="match status" value="1"/>
</dbReference>
<dbReference type="PANTHER" id="PTHR30544:SF5">
    <property type="entry name" value="RADICAL SAM CORE DOMAIN-CONTAINING PROTEIN"/>
    <property type="match status" value="1"/>
</dbReference>
<dbReference type="Pfam" id="PF04055">
    <property type="entry name" value="Radical_SAM"/>
    <property type="match status" value="1"/>
</dbReference>
<dbReference type="Pfam" id="PF21016">
    <property type="entry name" value="RlmN_N"/>
    <property type="match status" value="1"/>
</dbReference>
<dbReference type="PIRSF" id="PIRSF006004">
    <property type="entry name" value="CHP00048"/>
    <property type="match status" value="1"/>
</dbReference>
<dbReference type="SFLD" id="SFLDF00275">
    <property type="entry name" value="adenosine_C2_methyltransferase"/>
    <property type="match status" value="1"/>
</dbReference>
<dbReference type="SFLD" id="SFLDS00029">
    <property type="entry name" value="Radical_SAM"/>
    <property type="match status" value="1"/>
</dbReference>
<dbReference type="SUPFAM" id="SSF102114">
    <property type="entry name" value="Radical SAM enzymes"/>
    <property type="match status" value="1"/>
</dbReference>
<dbReference type="PROSITE" id="PS51918">
    <property type="entry name" value="RADICAL_SAM"/>
    <property type="match status" value="1"/>
</dbReference>
<proteinExistence type="inferred from homology"/>
<evidence type="ECO:0000255" key="1">
    <source>
        <dbReference type="HAMAP-Rule" id="MF_01849"/>
    </source>
</evidence>
<evidence type="ECO:0000255" key="2">
    <source>
        <dbReference type="PROSITE-ProRule" id="PRU01266"/>
    </source>
</evidence>
<name>RLMN_RALN1</name>
<gene>
    <name evidence="1" type="primary">rlmN</name>
    <name type="ordered locus">RSc1212</name>
</gene>
<accession>Q8Y032</accession>